<organism>
    <name type="scientific">Mycoplasmopsis agalactiae (strain NCTC 10123 / CIP 59.7 / PG2)</name>
    <name type="common">Mycoplasma agalactiae</name>
    <dbReference type="NCBI Taxonomy" id="347257"/>
    <lineage>
        <taxon>Bacteria</taxon>
        <taxon>Bacillati</taxon>
        <taxon>Mycoplasmatota</taxon>
        <taxon>Mycoplasmoidales</taxon>
        <taxon>Metamycoplasmataceae</taxon>
        <taxon>Mycoplasmopsis</taxon>
    </lineage>
</organism>
<name>RL35_MYCAP</name>
<dbReference type="EMBL" id="CU179680">
    <property type="protein sequence ID" value="CAL59174.1"/>
    <property type="molecule type" value="Genomic_DNA"/>
</dbReference>
<dbReference type="RefSeq" id="WP_004023889.1">
    <property type="nucleotide sequence ID" value="NC_009497.1"/>
</dbReference>
<dbReference type="SMR" id="A5IYR5"/>
<dbReference type="STRING" id="347257.MAG4760"/>
<dbReference type="GeneID" id="66645590"/>
<dbReference type="GeneID" id="93358218"/>
<dbReference type="KEGG" id="maa:MAG4760"/>
<dbReference type="HOGENOM" id="CLU_169643_3_1_14"/>
<dbReference type="Proteomes" id="UP000007065">
    <property type="component" value="Chromosome"/>
</dbReference>
<dbReference type="GO" id="GO:0022625">
    <property type="term" value="C:cytosolic large ribosomal subunit"/>
    <property type="evidence" value="ECO:0007669"/>
    <property type="project" value="TreeGrafter"/>
</dbReference>
<dbReference type="GO" id="GO:0003735">
    <property type="term" value="F:structural constituent of ribosome"/>
    <property type="evidence" value="ECO:0007669"/>
    <property type="project" value="InterPro"/>
</dbReference>
<dbReference type="GO" id="GO:0006412">
    <property type="term" value="P:translation"/>
    <property type="evidence" value="ECO:0007669"/>
    <property type="project" value="UniProtKB-UniRule"/>
</dbReference>
<dbReference type="FunFam" id="4.10.410.60:FF:000001">
    <property type="entry name" value="50S ribosomal protein L35"/>
    <property type="match status" value="1"/>
</dbReference>
<dbReference type="Gene3D" id="4.10.410.60">
    <property type="match status" value="1"/>
</dbReference>
<dbReference type="HAMAP" id="MF_00514">
    <property type="entry name" value="Ribosomal_bL35"/>
    <property type="match status" value="1"/>
</dbReference>
<dbReference type="InterPro" id="IPR001706">
    <property type="entry name" value="Ribosomal_bL35"/>
</dbReference>
<dbReference type="InterPro" id="IPR021137">
    <property type="entry name" value="Ribosomal_bL35-like"/>
</dbReference>
<dbReference type="InterPro" id="IPR018265">
    <property type="entry name" value="Ribosomal_bL35_CS"/>
</dbReference>
<dbReference type="InterPro" id="IPR037229">
    <property type="entry name" value="Ribosomal_bL35_sf"/>
</dbReference>
<dbReference type="NCBIfam" id="TIGR00001">
    <property type="entry name" value="rpmI_bact"/>
    <property type="match status" value="1"/>
</dbReference>
<dbReference type="PANTHER" id="PTHR33343">
    <property type="entry name" value="54S RIBOSOMAL PROTEIN BL35M"/>
    <property type="match status" value="1"/>
</dbReference>
<dbReference type="PANTHER" id="PTHR33343:SF1">
    <property type="entry name" value="LARGE RIBOSOMAL SUBUNIT PROTEIN BL35M"/>
    <property type="match status" value="1"/>
</dbReference>
<dbReference type="Pfam" id="PF01632">
    <property type="entry name" value="Ribosomal_L35p"/>
    <property type="match status" value="1"/>
</dbReference>
<dbReference type="PRINTS" id="PR00064">
    <property type="entry name" value="RIBOSOMALL35"/>
</dbReference>
<dbReference type="SUPFAM" id="SSF143034">
    <property type="entry name" value="L35p-like"/>
    <property type="match status" value="1"/>
</dbReference>
<dbReference type="PROSITE" id="PS00936">
    <property type="entry name" value="RIBOSOMAL_L35"/>
    <property type="match status" value="1"/>
</dbReference>
<accession>A5IYR5</accession>
<sequence length="62" mass="7198">MPKMKTKSALKKRIKVTATGKVIREQAYRSHLAQNKTTKQKRQSRKSAQMHSSDLKRFKALI</sequence>
<keyword id="KW-1185">Reference proteome</keyword>
<keyword id="KW-0687">Ribonucleoprotein</keyword>
<keyword id="KW-0689">Ribosomal protein</keyword>
<reference key="1">
    <citation type="journal article" date="2007" name="PLoS Genet.">
        <title>Being pathogenic, plastic, and sexual while living with a nearly minimal bacterial genome.</title>
        <authorList>
            <person name="Sirand-Pugnet P."/>
            <person name="Lartigue C."/>
            <person name="Marenda M."/>
            <person name="Jacob D."/>
            <person name="Barre A."/>
            <person name="Barbe V."/>
            <person name="Schenowitz C."/>
            <person name="Mangenot S."/>
            <person name="Couloux A."/>
            <person name="Segurens B."/>
            <person name="de Daruvar A."/>
            <person name="Blanchard A."/>
            <person name="Citti C."/>
        </authorList>
    </citation>
    <scope>NUCLEOTIDE SEQUENCE [LARGE SCALE GENOMIC DNA]</scope>
    <source>
        <strain>NCTC 10123 / CIP 59.7 / PG2</strain>
    </source>
</reference>
<feature type="chain" id="PRO_1000127380" description="Large ribosomal subunit protein bL35">
    <location>
        <begin position="1"/>
        <end position="62"/>
    </location>
</feature>
<feature type="region of interest" description="Disordered" evidence="2">
    <location>
        <begin position="31"/>
        <end position="62"/>
    </location>
</feature>
<feature type="compositionally biased region" description="Basic and acidic residues" evidence="2">
    <location>
        <begin position="53"/>
        <end position="62"/>
    </location>
</feature>
<comment type="similarity">
    <text evidence="1">Belongs to the bacterial ribosomal protein bL35 family.</text>
</comment>
<proteinExistence type="inferred from homology"/>
<evidence type="ECO:0000255" key="1">
    <source>
        <dbReference type="HAMAP-Rule" id="MF_00514"/>
    </source>
</evidence>
<evidence type="ECO:0000256" key="2">
    <source>
        <dbReference type="SAM" id="MobiDB-lite"/>
    </source>
</evidence>
<evidence type="ECO:0000305" key="3"/>
<protein>
    <recommendedName>
        <fullName evidence="1">Large ribosomal subunit protein bL35</fullName>
    </recommendedName>
    <alternativeName>
        <fullName evidence="3">50S ribosomal protein L35</fullName>
    </alternativeName>
</protein>
<gene>
    <name evidence="1" type="primary">rpmI</name>
    <name type="ordered locus">MAG4760</name>
</gene>